<sequence>MLPNIILILLIRYCSCGAGSRVYEKYGKQVQLSPATTSSYREWYDSNREHSTRNNTNVDDFQTQLKKSLENTTAAYNATFMQELIEERQRYLEKLNEGQFINDQRRLVEELLDPNYYEKTVHPKRDYTRPTRVNLSMSLYQILDVDEHMQSIEVNVWMVQHWYDEFLDWNPVDYGMINRTIVPYHQIWIPDTYLYNSEELEQKKTESLMNAQLETGHWNQKKDGAKVQLMFPAIYKLSCRMDVRWFPYDRQNCTFIISSWTHDKQTIDYWPLSSTVNLGNMARNDEWEVISFEFVRVEETFKCCTAPWVMLYAHLVIRRKPLYYMINLVVPTSIITIVAVTGFFTPTSSSSERDEKLYLGINTLLTMSVMMLMVCNQMPSTSTYVPLMSWYYIGIIMVIVVGTFLATGVLAIHGQKHYNKPISDRIRKLIYNPVVEFFILSPPTSLIDLWTEFGVISEQRHSTHLDPLLLQHMDPISHTTRADPQHFFGSISSQMCDLQSTYSYTARLATITRQYTQHAKMKALRKNQYRMSMDTSQARGVKKQKMQRRCSLEWEFLANVLDRILLTIFCGFTFAVFIILIGFDSFFTFHTDSPPKTM</sequence>
<keyword id="KW-1003">Cell membrane</keyword>
<keyword id="KW-0325">Glycoprotein</keyword>
<keyword id="KW-0407">Ion channel</keyword>
<keyword id="KW-0406">Ion transport</keyword>
<keyword id="KW-1071">Ligand-gated ion channel</keyword>
<keyword id="KW-0472">Membrane</keyword>
<keyword id="KW-0628">Postsynaptic cell membrane</keyword>
<keyword id="KW-0675">Receptor</keyword>
<keyword id="KW-1185">Reference proteome</keyword>
<keyword id="KW-0732">Signal</keyword>
<keyword id="KW-0770">Synapse</keyword>
<keyword id="KW-0812">Transmembrane</keyword>
<keyword id="KW-1133">Transmembrane helix</keyword>
<keyword id="KW-0813">Transport</keyword>
<reference key="1">
    <citation type="journal article" date="1998" name="Science">
        <title>Genome sequence of the nematode C. elegans: a platform for investigating biology.</title>
        <authorList>
            <consortium name="The C. elegans sequencing consortium"/>
        </authorList>
    </citation>
    <scope>NUCLEOTIDE SEQUENCE [LARGE SCALE GENOMIC DNA]</scope>
    <source>
        <strain>Bristol N2</strain>
    </source>
</reference>
<reference key="2">
    <citation type="journal article" date="2013" name="Eur. J. Neurosci.">
        <title>Nicotine-motivated behavior in Caenorhabditis elegans requires the nicotinic acetylcholine receptor subunits acr-5 and acr-15.</title>
        <authorList>
            <person name="Sellings L."/>
            <person name="Pereira S."/>
            <person name="Qian C."/>
            <person name="Dixon-McDougall T."/>
            <person name="Nowak C."/>
            <person name="Zhao B."/>
            <person name="Tyndale R.F."/>
            <person name="van der Kooy D."/>
        </authorList>
    </citation>
    <scope>FUNCTION</scope>
</reference>
<evidence type="ECO:0000250" key="1"/>
<evidence type="ECO:0000255" key="2"/>
<evidence type="ECO:0000255" key="3">
    <source>
        <dbReference type="PROSITE-ProRule" id="PRU00498"/>
    </source>
</evidence>
<evidence type="ECO:0000269" key="4">
    <source>
    </source>
</evidence>
<evidence type="ECO:0000305" key="5"/>
<evidence type="ECO:0000312" key="6">
    <source>
        <dbReference type="WormBase" id="K03F8.2"/>
    </source>
</evidence>
<accession>P54246</accession>
<accession>Q3Y417</accession>
<organism>
    <name type="scientific">Caenorhabditis elegans</name>
    <dbReference type="NCBI Taxonomy" id="6239"/>
    <lineage>
        <taxon>Eukaryota</taxon>
        <taxon>Metazoa</taxon>
        <taxon>Ecdysozoa</taxon>
        <taxon>Nematoda</taxon>
        <taxon>Chromadorea</taxon>
        <taxon>Rhabditida</taxon>
        <taxon>Rhabditina</taxon>
        <taxon>Rhabditomorpha</taxon>
        <taxon>Rhabditoidea</taxon>
        <taxon>Rhabditidae</taxon>
        <taxon>Peloderinae</taxon>
        <taxon>Caenorhabditis</taxon>
    </lineage>
</organism>
<comment type="function">
    <text evidence="4">Subunit of nicotinic acetylcholine receptor (nAChR) (PubMed:23351035). Involved in nAChR sensitivity to nicotine (PubMed:23351035). Modulates locomotion towards the drug nicotine (PubMed:23351035).</text>
</comment>
<comment type="subcellular location">
    <subcellularLocation>
        <location evidence="1">Postsynaptic cell membrane</location>
        <topology evidence="1">Multi-pass membrane protein</topology>
    </subcellularLocation>
    <subcellularLocation>
        <location evidence="1">Cell membrane</location>
        <topology evidence="1">Multi-pass membrane protein</topology>
    </subcellularLocation>
</comment>
<comment type="similarity">
    <text evidence="5">Belongs to the ligand-gated ion channel (TC 1.A.9) family. Acetylcholine receptor (TC 1.A.9.1) subfamily.</text>
</comment>
<name>ACR5_CAEEL</name>
<dbReference type="EMBL" id="BX284603">
    <property type="protein sequence ID" value="CCD63926.1"/>
    <property type="molecule type" value="Genomic_DNA"/>
</dbReference>
<dbReference type="PIR" id="T16546">
    <property type="entry name" value="T16546"/>
</dbReference>
<dbReference type="RefSeq" id="NP_001367477.1">
    <property type="nucleotide sequence ID" value="NM_001379767.1"/>
</dbReference>
<dbReference type="RefSeq" id="NP_498437.2">
    <property type="nucleotide sequence ID" value="NM_066036.2"/>
</dbReference>
<dbReference type="SMR" id="P54246"/>
<dbReference type="FunCoup" id="P54246">
    <property type="interactions" value="74"/>
</dbReference>
<dbReference type="STRING" id="6239.K03F8.2.1"/>
<dbReference type="TCDB" id="1.A.9.1.5">
    <property type="family name" value="the neurotransmitter receptor, cys loop, ligand-gated ion channel (lic) family"/>
</dbReference>
<dbReference type="GlyCosmos" id="P54246">
    <property type="glycosylation" value="6 sites, No reported glycans"/>
</dbReference>
<dbReference type="PaxDb" id="6239-K03F8.2"/>
<dbReference type="EnsemblMetazoa" id="K03F8.2.1">
    <property type="protein sequence ID" value="K03F8.2.1"/>
    <property type="gene ID" value="WBGene00000044"/>
</dbReference>
<dbReference type="GeneID" id="191596"/>
<dbReference type="UCSC" id="K03F8.2">
    <property type="organism name" value="c. elegans"/>
</dbReference>
<dbReference type="AGR" id="WB:WBGene00000044"/>
<dbReference type="WormBase" id="K03F8.2">
    <property type="protein sequence ID" value="CE54125"/>
    <property type="gene ID" value="WBGene00000044"/>
    <property type="gene designation" value="acr-5"/>
</dbReference>
<dbReference type="eggNOG" id="KOG3645">
    <property type="taxonomic scope" value="Eukaryota"/>
</dbReference>
<dbReference type="HOGENOM" id="CLU_018074_0_2_1"/>
<dbReference type="InParanoid" id="P54246"/>
<dbReference type="OrthoDB" id="5816887at2759"/>
<dbReference type="PhylomeDB" id="P54246"/>
<dbReference type="Reactome" id="R-CEL-112314">
    <property type="pathway name" value="Neurotransmitter receptors and postsynaptic signal transmission"/>
</dbReference>
<dbReference type="Reactome" id="R-CEL-629594">
    <property type="pathway name" value="Highly calcium permeable postsynaptic nicotinic acetylcholine receptors"/>
</dbReference>
<dbReference type="PRO" id="PR:P54246"/>
<dbReference type="Proteomes" id="UP000001940">
    <property type="component" value="Chromosome III"/>
</dbReference>
<dbReference type="Bgee" id="WBGene00000044">
    <property type="expression patterns" value="Expressed in larva and 2 other cell types or tissues"/>
</dbReference>
<dbReference type="GO" id="GO:0043005">
    <property type="term" value="C:neuron projection"/>
    <property type="evidence" value="ECO:0000318"/>
    <property type="project" value="GO_Central"/>
</dbReference>
<dbReference type="GO" id="GO:0005886">
    <property type="term" value="C:plasma membrane"/>
    <property type="evidence" value="ECO:0000318"/>
    <property type="project" value="GO_Central"/>
</dbReference>
<dbReference type="GO" id="GO:0045211">
    <property type="term" value="C:postsynaptic membrane"/>
    <property type="evidence" value="ECO:0007669"/>
    <property type="project" value="UniProtKB-SubCell"/>
</dbReference>
<dbReference type="GO" id="GO:0045202">
    <property type="term" value="C:synapse"/>
    <property type="evidence" value="ECO:0000318"/>
    <property type="project" value="GO_Central"/>
</dbReference>
<dbReference type="GO" id="GO:1902495">
    <property type="term" value="C:transmembrane transporter complex"/>
    <property type="evidence" value="ECO:0000318"/>
    <property type="project" value="GO_Central"/>
</dbReference>
<dbReference type="GO" id="GO:0005231">
    <property type="term" value="F:excitatory extracellular ligand-gated monoatomic ion channel activity"/>
    <property type="evidence" value="ECO:0000318"/>
    <property type="project" value="GO_Central"/>
</dbReference>
<dbReference type="GO" id="GO:0004888">
    <property type="term" value="F:transmembrane signaling receptor activity"/>
    <property type="evidence" value="ECO:0007669"/>
    <property type="project" value="InterPro"/>
</dbReference>
<dbReference type="GO" id="GO:1904315">
    <property type="term" value="F:transmitter-gated monoatomic ion channel activity involved in regulation of postsynaptic membrane potential"/>
    <property type="evidence" value="ECO:0000318"/>
    <property type="project" value="GO_Central"/>
</dbReference>
<dbReference type="GO" id="GO:0071316">
    <property type="term" value="P:cellular response to nicotine"/>
    <property type="evidence" value="ECO:0000315"/>
    <property type="project" value="UniProtKB"/>
</dbReference>
<dbReference type="GO" id="GO:0007268">
    <property type="term" value="P:chemical synaptic transmission"/>
    <property type="evidence" value="ECO:0000318"/>
    <property type="project" value="GO_Central"/>
</dbReference>
<dbReference type="GO" id="GO:0034220">
    <property type="term" value="P:monoatomic ion transmembrane transport"/>
    <property type="evidence" value="ECO:0000318"/>
    <property type="project" value="GO_Central"/>
</dbReference>
<dbReference type="GO" id="GO:0042391">
    <property type="term" value="P:regulation of membrane potential"/>
    <property type="evidence" value="ECO:0000318"/>
    <property type="project" value="GO_Central"/>
</dbReference>
<dbReference type="CDD" id="cd18997">
    <property type="entry name" value="LGIC_ECD_nAChR"/>
    <property type="match status" value="1"/>
</dbReference>
<dbReference type="CDD" id="cd19051">
    <property type="entry name" value="LGIC_TM_cation"/>
    <property type="match status" value="1"/>
</dbReference>
<dbReference type="FunFam" id="1.20.58.390:FF:000063">
    <property type="entry name" value="AcetylCholine Receptor"/>
    <property type="match status" value="1"/>
</dbReference>
<dbReference type="FunFam" id="2.70.170.10:FF:000031">
    <property type="entry name" value="AcetylCholine Receptor"/>
    <property type="match status" value="1"/>
</dbReference>
<dbReference type="Gene3D" id="2.70.170.10">
    <property type="entry name" value="Neurotransmitter-gated ion-channel ligand-binding domain"/>
    <property type="match status" value="1"/>
</dbReference>
<dbReference type="Gene3D" id="1.20.58.390">
    <property type="entry name" value="Neurotransmitter-gated ion-channel transmembrane domain"/>
    <property type="match status" value="1"/>
</dbReference>
<dbReference type="InterPro" id="IPR006202">
    <property type="entry name" value="Neur_chan_lig-bd"/>
</dbReference>
<dbReference type="InterPro" id="IPR036734">
    <property type="entry name" value="Neur_chan_lig-bd_sf"/>
</dbReference>
<dbReference type="InterPro" id="IPR006201">
    <property type="entry name" value="Neur_channel"/>
</dbReference>
<dbReference type="InterPro" id="IPR036719">
    <property type="entry name" value="Neuro-gated_channel_TM_sf"/>
</dbReference>
<dbReference type="InterPro" id="IPR038050">
    <property type="entry name" value="Neuro_actylchol_rec"/>
</dbReference>
<dbReference type="InterPro" id="IPR006029">
    <property type="entry name" value="Neurotrans-gated_channel_TM"/>
</dbReference>
<dbReference type="InterPro" id="IPR018000">
    <property type="entry name" value="Neurotransmitter_ion_chnl_CS"/>
</dbReference>
<dbReference type="PANTHER" id="PTHR18945">
    <property type="entry name" value="NEUROTRANSMITTER GATED ION CHANNEL"/>
    <property type="match status" value="1"/>
</dbReference>
<dbReference type="Pfam" id="PF02931">
    <property type="entry name" value="Neur_chan_LBD"/>
    <property type="match status" value="1"/>
</dbReference>
<dbReference type="Pfam" id="PF02932">
    <property type="entry name" value="Neur_chan_memb"/>
    <property type="match status" value="1"/>
</dbReference>
<dbReference type="PRINTS" id="PR00252">
    <property type="entry name" value="NRIONCHANNEL"/>
</dbReference>
<dbReference type="SUPFAM" id="SSF90112">
    <property type="entry name" value="Neurotransmitter-gated ion-channel transmembrane pore"/>
    <property type="match status" value="1"/>
</dbReference>
<dbReference type="SUPFAM" id="SSF63712">
    <property type="entry name" value="Nicotinic receptor ligand binding domain-like"/>
    <property type="match status" value="1"/>
</dbReference>
<dbReference type="PROSITE" id="PS00236">
    <property type="entry name" value="NEUROTR_ION_CHANNEL"/>
    <property type="match status" value="1"/>
</dbReference>
<protein>
    <recommendedName>
        <fullName>Acetylcholine receptor subunit alpha-type acr-5</fullName>
    </recommendedName>
</protein>
<proteinExistence type="inferred from homology"/>
<gene>
    <name evidence="6" type="primary">acr-5</name>
    <name evidence="6" type="ORF">K03F8.2</name>
</gene>
<feature type="signal peptide" evidence="2">
    <location>
        <begin position="1"/>
        <end position="16"/>
    </location>
</feature>
<feature type="chain" id="PRO_0000000402" description="Acetylcholine receptor subunit alpha-type acr-5">
    <location>
        <begin position="17"/>
        <end position="598"/>
    </location>
</feature>
<feature type="topological domain" description="Extracellular" evidence="5">
    <location>
        <begin position="17"/>
        <end position="323"/>
    </location>
</feature>
<feature type="transmembrane region" description="Helical; Name=1" evidence="2">
    <location>
        <begin position="324"/>
        <end position="344"/>
    </location>
</feature>
<feature type="topological domain" description="Cytoplasmic" evidence="5">
    <location>
        <begin position="345"/>
        <end position="356"/>
    </location>
</feature>
<feature type="transmembrane region" description="Helical; Name=2" evidence="2">
    <location>
        <begin position="357"/>
        <end position="377"/>
    </location>
</feature>
<feature type="topological domain" description="Extracellular" evidence="5">
    <location>
        <begin position="378"/>
        <end position="391"/>
    </location>
</feature>
<feature type="transmembrane region" description="Helical; Name=3" evidence="2">
    <location>
        <begin position="392"/>
        <end position="412"/>
    </location>
</feature>
<feature type="topological domain" description="Cytoplasmic" evidence="5">
    <location>
        <begin position="413"/>
        <end position="563"/>
    </location>
</feature>
<feature type="transmembrane region" description="Helical; Name=4" evidence="2">
    <location>
        <begin position="564"/>
        <end position="584"/>
    </location>
</feature>
<feature type="topological domain" description="Extracellular" evidence="5">
    <location>
        <begin position="585"/>
        <end position="598"/>
    </location>
</feature>
<feature type="glycosylation site" description="N-linked (GlcNAc...) asparagine" evidence="3">
    <location>
        <position position="54"/>
    </location>
</feature>
<feature type="glycosylation site" description="N-linked (GlcNAc...) asparagine" evidence="3">
    <location>
        <position position="71"/>
    </location>
</feature>
<feature type="glycosylation site" description="N-linked (GlcNAc...) asparagine" evidence="3">
    <location>
        <position position="77"/>
    </location>
</feature>
<feature type="glycosylation site" description="N-linked (GlcNAc...) asparagine" evidence="3">
    <location>
        <position position="134"/>
    </location>
</feature>
<feature type="glycosylation site" description="N-linked (GlcNAc...) asparagine" evidence="3">
    <location>
        <position position="178"/>
    </location>
</feature>
<feature type="glycosylation site" description="N-linked (GlcNAc...) asparagine" evidence="3">
    <location>
        <position position="252"/>
    </location>
</feature>